<organism>
    <name type="scientific">Brucella melitensis biotype 1 (strain ATCC 23456 / CCUG 17765 / NCTC 10094 / 16M)</name>
    <dbReference type="NCBI Taxonomy" id="224914"/>
    <lineage>
        <taxon>Bacteria</taxon>
        <taxon>Pseudomonadati</taxon>
        <taxon>Pseudomonadota</taxon>
        <taxon>Alphaproteobacteria</taxon>
        <taxon>Hyphomicrobiales</taxon>
        <taxon>Brucellaceae</taxon>
        <taxon>Brucella/Ochrobactrum group</taxon>
        <taxon>Brucella</taxon>
    </lineage>
</organism>
<protein>
    <recommendedName>
        <fullName>Type IV secretion system protein VirB11</fullName>
    </recommendedName>
</protein>
<dbReference type="EMBL" id="AE008918">
    <property type="protein sequence ID" value="AAL53276.1"/>
    <property type="status" value="ALT_INIT"/>
    <property type="molecule type" value="Genomic_DNA"/>
</dbReference>
<dbReference type="PIR" id="AI3513">
    <property type="entry name" value="AI3513"/>
</dbReference>
<dbReference type="SMR" id="Q8YDY9"/>
<dbReference type="KEGG" id="bme:BMEII0035"/>
<dbReference type="KEGG" id="bmel:DK63_2084"/>
<dbReference type="PATRIC" id="fig|224914.52.peg.2185"/>
<dbReference type="eggNOG" id="COG0630">
    <property type="taxonomic scope" value="Bacteria"/>
</dbReference>
<dbReference type="PRO" id="PR:Q8YDY9"/>
<dbReference type="Proteomes" id="UP000000419">
    <property type="component" value="Chromosome II"/>
</dbReference>
<dbReference type="GO" id="GO:0005737">
    <property type="term" value="C:cytoplasm"/>
    <property type="evidence" value="ECO:0007669"/>
    <property type="project" value="UniProtKB-SubCell"/>
</dbReference>
<dbReference type="GO" id="GO:0043684">
    <property type="term" value="C:type IV secretion system complex"/>
    <property type="evidence" value="ECO:0007669"/>
    <property type="project" value="InterPro"/>
</dbReference>
<dbReference type="GO" id="GO:0005524">
    <property type="term" value="F:ATP binding"/>
    <property type="evidence" value="ECO:0007669"/>
    <property type="project" value="UniProtKB-KW"/>
</dbReference>
<dbReference type="GO" id="GO:0016887">
    <property type="term" value="F:ATP hydrolysis activity"/>
    <property type="evidence" value="ECO:0007669"/>
    <property type="project" value="InterPro"/>
</dbReference>
<dbReference type="GO" id="GO:0044097">
    <property type="term" value="P:secretion by the type IV secretion system"/>
    <property type="evidence" value="ECO:0007669"/>
    <property type="project" value="InterPro"/>
</dbReference>
<dbReference type="CDD" id="cd01130">
    <property type="entry name" value="VirB11-like_ATPase"/>
    <property type="match status" value="1"/>
</dbReference>
<dbReference type="Gene3D" id="3.30.450.90">
    <property type="match status" value="1"/>
</dbReference>
<dbReference type="Gene3D" id="3.40.50.300">
    <property type="entry name" value="P-loop containing nucleotide triphosphate hydrolases"/>
    <property type="match status" value="1"/>
</dbReference>
<dbReference type="InterPro" id="IPR027417">
    <property type="entry name" value="P-loop_NTPase"/>
</dbReference>
<dbReference type="InterPro" id="IPR025662">
    <property type="entry name" value="Sigma_54_int_dom_ATP-bd_1"/>
</dbReference>
<dbReference type="InterPro" id="IPR001482">
    <property type="entry name" value="T2SS/T4SS_dom"/>
</dbReference>
<dbReference type="InterPro" id="IPR050921">
    <property type="entry name" value="T4SS_GSP_E_ATPase"/>
</dbReference>
<dbReference type="InterPro" id="IPR014155">
    <property type="entry name" value="VirB11"/>
</dbReference>
<dbReference type="NCBIfam" id="TIGR02788">
    <property type="entry name" value="VirB11"/>
    <property type="match status" value="1"/>
</dbReference>
<dbReference type="PANTHER" id="PTHR30486">
    <property type="entry name" value="TWITCHING MOTILITY PROTEIN PILT"/>
    <property type="match status" value="1"/>
</dbReference>
<dbReference type="PANTHER" id="PTHR30486:SF6">
    <property type="entry name" value="TYPE IV PILUS RETRACTATION ATPASE PILT"/>
    <property type="match status" value="1"/>
</dbReference>
<dbReference type="Pfam" id="PF00437">
    <property type="entry name" value="T2SSE"/>
    <property type="match status" value="1"/>
</dbReference>
<dbReference type="SUPFAM" id="SSF52540">
    <property type="entry name" value="P-loop containing nucleoside triphosphate hydrolases"/>
    <property type="match status" value="1"/>
</dbReference>
<gene>
    <name type="primary">virB11</name>
    <name type="ordered locus">BMEII0035</name>
</gene>
<sequence>MMSNRSDFIVPDEAAVKRAASVNFHLEPLRPWLDDPQITEVCVNRPGEVFCERASAWEYYAVPNLDYEHLISLGTATARFVDQDISDSRPVLSAILPMGERIQIVRPPACEHGTISVTIRKPSFTRRTLEDYAQQGFFKHVRPMSKSLTPFEQELLALKEAGDYMSFLRRAVQLERVIVVAGETGSGKTTLMKALMQEIPFDQRLITIEDVPELFLPDHPNHVHLFYPSEAKEEENAPVTAATLLRSCLRMKPTRILLAELRGGETYDFINVAASGHGGSITSCHAGSCELTFERLALMVLQNRQGRQLPYEIIRRLLYLVVDVVVHVHNGVHDGTGRHISEVWYDPNTKRALSLQHSEKAQ</sequence>
<reference key="1">
    <citation type="journal article" date="2002" name="Proc. Natl. Acad. Sci. U.S.A.">
        <title>The genome sequence of the facultative intracellular pathogen Brucella melitensis.</title>
        <authorList>
            <person name="DelVecchio V.G."/>
            <person name="Kapatral V."/>
            <person name="Redkar R.J."/>
            <person name="Patra G."/>
            <person name="Mujer C."/>
            <person name="Los T."/>
            <person name="Ivanova N."/>
            <person name="Anderson I."/>
            <person name="Bhattacharyya A."/>
            <person name="Lykidis A."/>
            <person name="Reznik G."/>
            <person name="Jablonski L."/>
            <person name="Larsen N."/>
            <person name="D'Souza M."/>
            <person name="Bernal A."/>
            <person name="Mazur M."/>
            <person name="Goltsman E."/>
            <person name="Selkov E."/>
            <person name="Elzer P.H."/>
            <person name="Hagius S."/>
            <person name="O'Callaghan D."/>
            <person name="Letesson J.-J."/>
            <person name="Haselkorn R."/>
            <person name="Kyrpides N.C."/>
            <person name="Overbeek R."/>
        </authorList>
    </citation>
    <scope>NUCLEOTIDE SEQUENCE [LARGE SCALE GENOMIC DNA]</scope>
    <source>
        <strain>ATCC 23456 / CCUG 17765 / NCTC 10094 / 16M</strain>
    </source>
</reference>
<proteinExistence type="inferred from homology"/>
<comment type="subcellular location">
    <subcellularLocation>
        <location evidence="2">Cytoplasm</location>
    </subcellularLocation>
</comment>
<comment type="similarity">
    <text evidence="2">Belongs to the GSP E family.</text>
</comment>
<comment type="sequence caution" evidence="2">
    <conflict type="erroneous initiation">
        <sequence resource="EMBL-CDS" id="AAL53276"/>
    </conflict>
    <text>Truncated N-terminus.</text>
</comment>
<keyword id="KW-0067">ATP-binding</keyword>
<keyword id="KW-0963">Cytoplasm</keyword>
<keyword id="KW-0547">Nucleotide-binding</keyword>
<keyword id="KW-0843">Virulence</keyword>
<accession>Q8YDY9</accession>
<name>VIRBB_BRUME</name>
<evidence type="ECO:0000255" key="1"/>
<evidence type="ECO:0000305" key="2"/>
<feature type="chain" id="PRO_0000291438" description="Type IV secretion system protein VirB11">
    <location>
        <begin position="1"/>
        <end position="362"/>
    </location>
</feature>
<feature type="binding site" evidence="1">
    <location>
        <begin position="182"/>
        <end position="189"/>
    </location>
    <ligand>
        <name>ATP</name>
        <dbReference type="ChEBI" id="CHEBI:30616"/>
    </ligand>
</feature>